<organism>
    <name type="scientific">Clavibacter michiganensis subsp. michiganensis (strain NCPPB 382)</name>
    <dbReference type="NCBI Taxonomy" id="443906"/>
    <lineage>
        <taxon>Bacteria</taxon>
        <taxon>Bacillati</taxon>
        <taxon>Actinomycetota</taxon>
        <taxon>Actinomycetes</taxon>
        <taxon>Micrococcales</taxon>
        <taxon>Microbacteriaceae</taxon>
        <taxon>Clavibacter</taxon>
    </lineage>
</organism>
<dbReference type="EC" id="2.7.7.60" evidence="1"/>
<dbReference type="EC" id="4.6.1.12" evidence="1"/>
<dbReference type="EMBL" id="AM711867">
    <property type="protein sequence ID" value="CAN02570.1"/>
    <property type="molecule type" value="Genomic_DNA"/>
</dbReference>
<dbReference type="RefSeq" id="WP_012039177.1">
    <property type="nucleotide sequence ID" value="NC_009480.1"/>
</dbReference>
<dbReference type="SMR" id="A5CTY4"/>
<dbReference type="KEGG" id="cmi:CMM_2489"/>
<dbReference type="eggNOG" id="COG0245">
    <property type="taxonomic scope" value="Bacteria"/>
</dbReference>
<dbReference type="eggNOG" id="COG1211">
    <property type="taxonomic scope" value="Bacteria"/>
</dbReference>
<dbReference type="HOGENOM" id="CLU_042800_2_5_11"/>
<dbReference type="OrthoDB" id="9802561at2"/>
<dbReference type="UniPathway" id="UPA00056">
    <property type="reaction ID" value="UER00093"/>
</dbReference>
<dbReference type="UniPathway" id="UPA00056">
    <property type="reaction ID" value="UER00095"/>
</dbReference>
<dbReference type="Proteomes" id="UP000001564">
    <property type="component" value="Chromosome"/>
</dbReference>
<dbReference type="GO" id="GO:0008685">
    <property type="term" value="F:2-C-methyl-D-erythritol 2,4-cyclodiphosphate synthase activity"/>
    <property type="evidence" value="ECO:0007669"/>
    <property type="project" value="UniProtKB-UniRule"/>
</dbReference>
<dbReference type="GO" id="GO:0050518">
    <property type="term" value="F:2-C-methyl-D-erythritol 4-phosphate cytidylyltransferase activity"/>
    <property type="evidence" value="ECO:0007669"/>
    <property type="project" value="UniProtKB-UniRule"/>
</dbReference>
<dbReference type="GO" id="GO:0046872">
    <property type="term" value="F:metal ion binding"/>
    <property type="evidence" value="ECO:0007669"/>
    <property type="project" value="UniProtKB-KW"/>
</dbReference>
<dbReference type="GO" id="GO:0019288">
    <property type="term" value="P:isopentenyl diphosphate biosynthetic process, methylerythritol 4-phosphate pathway"/>
    <property type="evidence" value="ECO:0007669"/>
    <property type="project" value="UniProtKB-UniRule"/>
</dbReference>
<dbReference type="GO" id="GO:0016114">
    <property type="term" value="P:terpenoid biosynthetic process"/>
    <property type="evidence" value="ECO:0007669"/>
    <property type="project" value="InterPro"/>
</dbReference>
<dbReference type="CDD" id="cd02516">
    <property type="entry name" value="CDP-ME_synthetase"/>
    <property type="match status" value="1"/>
</dbReference>
<dbReference type="CDD" id="cd00554">
    <property type="entry name" value="MECDP_synthase"/>
    <property type="match status" value="1"/>
</dbReference>
<dbReference type="FunFam" id="3.30.1330.50:FF:000003">
    <property type="entry name" value="2-C-methyl-D-erythritol 2,4-cyclodiphosphate synthase"/>
    <property type="match status" value="1"/>
</dbReference>
<dbReference type="Gene3D" id="3.30.1330.50">
    <property type="entry name" value="2-C-methyl-D-erythritol 2,4-cyclodiphosphate synthase"/>
    <property type="match status" value="1"/>
</dbReference>
<dbReference type="Gene3D" id="3.90.550.10">
    <property type="entry name" value="Spore Coat Polysaccharide Biosynthesis Protein SpsA, Chain A"/>
    <property type="match status" value="1"/>
</dbReference>
<dbReference type="HAMAP" id="MF_00108">
    <property type="entry name" value="IspD"/>
    <property type="match status" value="1"/>
</dbReference>
<dbReference type="HAMAP" id="MF_01520">
    <property type="entry name" value="IspDF"/>
    <property type="match status" value="1"/>
</dbReference>
<dbReference type="HAMAP" id="MF_00107">
    <property type="entry name" value="IspF"/>
    <property type="match status" value="1"/>
</dbReference>
<dbReference type="InterPro" id="IPR001228">
    <property type="entry name" value="IspD"/>
</dbReference>
<dbReference type="InterPro" id="IPR026596">
    <property type="entry name" value="IspD/F"/>
</dbReference>
<dbReference type="InterPro" id="IPR034683">
    <property type="entry name" value="IspD/TarI"/>
</dbReference>
<dbReference type="InterPro" id="IPR018294">
    <property type="entry name" value="ISPD_synthase_CS"/>
</dbReference>
<dbReference type="InterPro" id="IPR003526">
    <property type="entry name" value="MECDP_synthase"/>
</dbReference>
<dbReference type="InterPro" id="IPR020555">
    <property type="entry name" value="MECDP_synthase_CS"/>
</dbReference>
<dbReference type="InterPro" id="IPR036571">
    <property type="entry name" value="MECDP_synthase_sf"/>
</dbReference>
<dbReference type="InterPro" id="IPR029044">
    <property type="entry name" value="Nucleotide-diphossugar_trans"/>
</dbReference>
<dbReference type="NCBIfam" id="TIGR00453">
    <property type="entry name" value="ispD"/>
    <property type="match status" value="1"/>
</dbReference>
<dbReference type="NCBIfam" id="TIGR00151">
    <property type="entry name" value="ispF"/>
    <property type="match status" value="1"/>
</dbReference>
<dbReference type="PANTHER" id="PTHR43181">
    <property type="entry name" value="2-C-METHYL-D-ERYTHRITOL 2,4-CYCLODIPHOSPHATE SYNTHASE, CHLOROPLASTIC"/>
    <property type="match status" value="1"/>
</dbReference>
<dbReference type="PANTHER" id="PTHR43181:SF1">
    <property type="entry name" value="2-C-METHYL-D-ERYTHRITOL 2,4-CYCLODIPHOSPHATE SYNTHASE, CHLOROPLASTIC"/>
    <property type="match status" value="1"/>
</dbReference>
<dbReference type="Pfam" id="PF01128">
    <property type="entry name" value="IspD"/>
    <property type="match status" value="1"/>
</dbReference>
<dbReference type="Pfam" id="PF02542">
    <property type="entry name" value="YgbB"/>
    <property type="match status" value="1"/>
</dbReference>
<dbReference type="SUPFAM" id="SSF69765">
    <property type="entry name" value="IpsF-like"/>
    <property type="match status" value="1"/>
</dbReference>
<dbReference type="SUPFAM" id="SSF53448">
    <property type="entry name" value="Nucleotide-diphospho-sugar transferases"/>
    <property type="match status" value="1"/>
</dbReference>
<dbReference type="PROSITE" id="PS01295">
    <property type="entry name" value="ISPD"/>
    <property type="match status" value="1"/>
</dbReference>
<dbReference type="PROSITE" id="PS01350">
    <property type="entry name" value="ISPF"/>
    <property type="match status" value="1"/>
</dbReference>
<sequence length="410" mass="40906">MSHDPVVPSAPATDGGATDGPRLGVVVVAAGSGTRLGAGIPKALVEVGGVTLLARSLSSVLGLAEEAHVVVVAPDTHLAETSAVVDAVAGAARGSVAVVVGGATRQGSVRAGLAALVGSVDTVLVHDAARALTPTDLFAAVARAVRAEGAGVVPGLPVTDTVKRVDPAGECLGTVDRSDLVGVQTPQGFPRAALDAAYARAAAEHTDDAALFQASGGRVRVIPGDALAFKVTTAWDLRRAEELVARDAGAGSASSRLRSGIGTDVHAVDASQPLWLAGLHWPGEAGLAGHSDGDAVSHAMCDALLSAAGLGDIGGIFGTDDPELDGAHGEVFLRRTAELVRDAGYRIVNVAVQVMAVRPKLSPRRAEAERILSAAVGAPVSLAGTTTDGLGFTGRGDGVAAVATALVERL</sequence>
<protein>
    <recommendedName>
        <fullName evidence="1">Bifunctional enzyme IspD/IspF</fullName>
    </recommendedName>
    <domain>
        <recommendedName>
            <fullName evidence="1">2-C-methyl-D-erythritol 4-phosphate cytidylyltransferase</fullName>
            <ecNumber evidence="1">2.7.7.60</ecNumber>
        </recommendedName>
        <alternativeName>
            <fullName evidence="1">4-diphosphocytidyl-2C-methyl-D-erythritol synthase</fullName>
        </alternativeName>
        <alternativeName>
            <fullName evidence="1">MEP cytidylyltransferase</fullName>
            <shortName evidence="1">MCT</shortName>
        </alternativeName>
    </domain>
    <domain>
        <recommendedName>
            <fullName evidence="1">2-C-methyl-D-erythritol 2,4-cyclodiphosphate synthase</fullName>
            <shortName evidence="1">MECDP-synthase</shortName>
            <shortName evidence="1">MECPP-synthase</shortName>
            <shortName evidence="1">MECPS</shortName>
            <ecNumber evidence="1">4.6.1.12</ecNumber>
        </recommendedName>
    </domain>
</protein>
<name>ISPDF_CLAM3</name>
<proteinExistence type="inferred from homology"/>
<keyword id="KW-0414">Isoprene biosynthesis</keyword>
<keyword id="KW-0456">Lyase</keyword>
<keyword id="KW-0479">Metal-binding</keyword>
<keyword id="KW-0511">Multifunctional enzyme</keyword>
<keyword id="KW-0548">Nucleotidyltransferase</keyword>
<keyword id="KW-0808">Transferase</keyword>
<gene>
    <name evidence="1" type="primary">ispDF</name>
    <name type="ordered locus">CMM_2489</name>
</gene>
<comment type="function">
    <text evidence="1">Bifunctional enzyme that catalyzes the formation of 4-diphosphocytidyl-2-C-methyl-D-erythritol from CTP and 2-C-methyl-D-erythritol 4-phosphate (MEP) (IspD), and catalyzes the conversion of 4-diphosphocytidyl-2-C-methyl-D-erythritol 2-phosphate (CDP-ME2P) to 2-C-methyl-D-erythritol 2,4-cyclodiphosphate (ME-CPP) with a corresponding release of cytidine 5-monophosphate (CMP) (IspF).</text>
</comment>
<comment type="catalytic activity">
    <reaction evidence="1">
        <text>2-C-methyl-D-erythritol 4-phosphate + CTP + H(+) = 4-CDP-2-C-methyl-D-erythritol + diphosphate</text>
        <dbReference type="Rhea" id="RHEA:13429"/>
        <dbReference type="ChEBI" id="CHEBI:15378"/>
        <dbReference type="ChEBI" id="CHEBI:33019"/>
        <dbReference type="ChEBI" id="CHEBI:37563"/>
        <dbReference type="ChEBI" id="CHEBI:57823"/>
        <dbReference type="ChEBI" id="CHEBI:58262"/>
        <dbReference type="EC" id="2.7.7.60"/>
    </reaction>
</comment>
<comment type="catalytic activity">
    <reaction evidence="1">
        <text>4-CDP-2-C-methyl-D-erythritol 2-phosphate = 2-C-methyl-D-erythritol 2,4-cyclic diphosphate + CMP</text>
        <dbReference type="Rhea" id="RHEA:23864"/>
        <dbReference type="ChEBI" id="CHEBI:57919"/>
        <dbReference type="ChEBI" id="CHEBI:58483"/>
        <dbReference type="ChEBI" id="CHEBI:60377"/>
        <dbReference type="EC" id="4.6.1.12"/>
    </reaction>
</comment>
<comment type="cofactor">
    <cofactor evidence="1">
        <name>a divalent metal cation</name>
        <dbReference type="ChEBI" id="CHEBI:60240"/>
    </cofactor>
</comment>
<comment type="pathway">
    <text evidence="1">Isoprenoid biosynthesis; isopentenyl diphosphate biosynthesis via DXP pathway; isopentenyl diphosphate from 1-deoxy-D-xylulose 5-phosphate: step 2/6.</text>
</comment>
<comment type="pathway">
    <text evidence="1">Isoprenoid biosynthesis; isopentenyl diphosphate biosynthesis via DXP pathway; isopentenyl diphosphate from 1-deoxy-D-xylulose 5-phosphate: step 4/6.</text>
</comment>
<comment type="similarity">
    <text evidence="1">In the N-terminal section; belongs to the IspD/TarI cytidylyltransferase family. IspD subfamily.</text>
</comment>
<comment type="similarity">
    <text evidence="1">In the C-terminal section; belongs to the IspF family.</text>
</comment>
<feature type="chain" id="PRO_0000315552" description="Bifunctional enzyme IspD/IspF">
    <location>
        <begin position="1"/>
        <end position="410"/>
    </location>
</feature>
<feature type="region of interest" description="2-C-methyl-D-erythritol 4-phosphate cytidylyltransferase" evidence="1">
    <location>
        <begin position="1"/>
        <end position="257"/>
    </location>
</feature>
<feature type="region of interest" description="2-C-methyl-D-erythritol 2,4-cyclodiphosphate synthase" evidence="1">
    <location>
        <begin position="258"/>
        <end position="410"/>
    </location>
</feature>
<feature type="binding site" evidence="1">
    <location>
        <begin position="264"/>
        <end position="266"/>
    </location>
    <ligand>
        <name>4-CDP-2-C-methyl-D-erythritol 2-phosphate</name>
        <dbReference type="ChEBI" id="CHEBI:57919"/>
    </ligand>
</feature>
<feature type="binding site" evidence="1">
    <location>
        <position position="264"/>
    </location>
    <ligand>
        <name>a divalent metal cation</name>
        <dbReference type="ChEBI" id="CHEBI:60240"/>
    </ligand>
</feature>
<feature type="binding site" evidence="1">
    <location>
        <position position="266"/>
    </location>
    <ligand>
        <name>a divalent metal cation</name>
        <dbReference type="ChEBI" id="CHEBI:60240"/>
    </ligand>
</feature>
<feature type="binding site" evidence="1">
    <location>
        <begin position="290"/>
        <end position="291"/>
    </location>
    <ligand>
        <name>4-CDP-2-C-methyl-D-erythritol 2-phosphate</name>
        <dbReference type="ChEBI" id="CHEBI:57919"/>
    </ligand>
</feature>
<feature type="binding site" evidence="1">
    <location>
        <position position="298"/>
    </location>
    <ligand>
        <name>a divalent metal cation</name>
        <dbReference type="ChEBI" id="CHEBI:60240"/>
    </ligand>
</feature>
<feature type="binding site" evidence="1">
    <location>
        <begin position="312"/>
        <end position="314"/>
    </location>
    <ligand>
        <name>4-CDP-2-C-methyl-D-erythritol 2-phosphate</name>
        <dbReference type="ChEBI" id="CHEBI:57919"/>
    </ligand>
</feature>
<feature type="binding site" evidence="1">
    <location>
        <begin position="385"/>
        <end position="388"/>
    </location>
    <ligand>
        <name>4-CDP-2-C-methyl-D-erythritol 2-phosphate</name>
        <dbReference type="ChEBI" id="CHEBI:57919"/>
    </ligand>
</feature>
<feature type="binding site" evidence="1">
    <location>
        <position position="392"/>
    </location>
    <ligand>
        <name>4-CDP-2-C-methyl-D-erythritol 2-phosphate</name>
        <dbReference type="ChEBI" id="CHEBI:57919"/>
    </ligand>
</feature>
<feature type="binding site" evidence="1">
    <location>
        <position position="395"/>
    </location>
    <ligand>
        <name>4-CDP-2-C-methyl-D-erythritol 2-phosphate</name>
        <dbReference type="ChEBI" id="CHEBI:57919"/>
    </ligand>
</feature>
<feature type="site" description="Transition state stabilizer" evidence="1">
    <location>
        <position position="35"/>
    </location>
</feature>
<feature type="site" description="Transition state stabilizer" evidence="1">
    <location>
        <position position="42"/>
    </location>
</feature>
<feature type="site" description="Positions MEP for the nucleophilic attack" evidence="1">
    <location>
        <position position="177"/>
    </location>
</feature>
<feature type="site" description="Positions MEP for the nucleophilic attack" evidence="1">
    <location>
        <position position="230"/>
    </location>
</feature>
<feature type="site" description="Transition state stabilizer" evidence="1">
    <location>
        <position position="290"/>
    </location>
</feature>
<feature type="site" description="Transition state stabilizer" evidence="1">
    <location>
        <position position="386"/>
    </location>
</feature>
<evidence type="ECO:0000255" key="1">
    <source>
        <dbReference type="HAMAP-Rule" id="MF_01520"/>
    </source>
</evidence>
<accession>A5CTY4</accession>
<reference key="1">
    <citation type="journal article" date="2008" name="J. Bacteriol.">
        <title>The genome sequence of the tomato-pathogenic actinomycete Clavibacter michiganensis subsp. michiganensis NCPPB382 reveals a large island involved in pathogenicity.</title>
        <authorList>
            <person name="Gartemann K.-H."/>
            <person name="Abt B."/>
            <person name="Bekel T."/>
            <person name="Burger A."/>
            <person name="Engemann J."/>
            <person name="Fluegel M."/>
            <person name="Gaigalat L."/>
            <person name="Goesmann A."/>
            <person name="Graefen I."/>
            <person name="Kalinowski J."/>
            <person name="Kaup O."/>
            <person name="Kirchner O."/>
            <person name="Krause L."/>
            <person name="Linke B."/>
            <person name="McHardy A."/>
            <person name="Meyer F."/>
            <person name="Pohle S."/>
            <person name="Rueckert C."/>
            <person name="Schneiker S."/>
            <person name="Zellermann E.-M."/>
            <person name="Puehler A."/>
            <person name="Eichenlaub R."/>
            <person name="Kaiser O."/>
            <person name="Bartels D."/>
        </authorList>
    </citation>
    <scope>NUCLEOTIDE SEQUENCE [LARGE SCALE GENOMIC DNA]</scope>
    <source>
        <strain>NCPPB 382</strain>
    </source>
</reference>